<protein>
    <recommendedName>
        <fullName>2-5A-dependent ribonuclease</fullName>
        <shortName>2-5A-dependent RNase</shortName>
        <ecNumber>3.1.26.-</ecNumber>
    </recommendedName>
    <alternativeName>
        <fullName>Ribonuclease 4</fullName>
    </alternativeName>
    <alternativeName>
        <fullName>Ribonuclease L</fullName>
        <shortName>RNase L</shortName>
    </alternativeName>
</protein>
<feature type="chain" id="PRO_0000067051" description="2-5A-dependent ribonuclease">
    <location>
        <begin position="1"/>
        <end position="741"/>
    </location>
</feature>
<feature type="repeat" description="ANK 1">
    <location>
        <begin position="24"/>
        <end position="53"/>
    </location>
</feature>
<feature type="repeat" description="ANK 2">
    <location>
        <begin position="58"/>
        <end position="87"/>
    </location>
</feature>
<feature type="repeat" description="ANK 3">
    <location>
        <begin position="91"/>
        <end position="120"/>
    </location>
</feature>
<feature type="repeat" description="ANK 4">
    <location>
        <begin position="124"/>
        <end position="153"/>
    </location>
</feature>
<feature type="repeat" description="ANK 5">
    <location>
        <begin position="167"/>
        <end position="197"/>
    </location>
</feature>
<feature type="repeat" description="ANK 6">
    <location>
        <begin position="201"/>
        <end position="234"/>
    </location>
</feature>
<feature type="repeat" description="ANK 7">
    <location>
        <begin position="238"/>
        <end position="268"/>
    </location>
</feature>
<feature type="repeat" description="ANK 8">
    <location>
        <begin position="272"/>
        <end position="301"/>
    </location>
</feature>
<feature type="repeat" description="ANK 9">
    <location>
        <begin position="303"/>
        <end position="329"/>
    </location>
</feature>
<feature type="domain" description="Protein kinase" evidence="2">
    <location>
        <begin position="365"/>
        <end position="586"/>
    </location>
</feature>
<feature type="domain" description="KEN" evidence="3">
    <location>
        <begin position="589"/>
        <end position="723"/>
    </location>
</feature>
<feature type="zinc finger region" description="C6-type; atypical">
    <location>
        <begin position="395"/>
        <end position="444"/>
    </location>
</feature>
<feature type="region of interest" description="Disordered" evidence="4">
    <location>
        <begin position="1"/>
        <end position="21"/>
    </location>
</feature>
<feature type="region of interest" description="2-5A binding (P-loop) 1">
    <location>
        <begin position="229"/>
        <end position="242"/>
    </location>
</feature>
<feature type="region of interest" description="2-5A binding (P-loop) 2">
    <location>
        <begin position="253"/>
        <end position="275"/>
    </location>
</feature>
<feature type="region of interest" description="Disordered" evidence="4">
    <location>
        <begin position="715"/>
        <end position="741"/>
    </location>
</feature>
<feature type="compositionally biased region" description="Polar residues" evidence="4">
    <location>
        <begin position="9"/>
        <end position="18"/>
    </location>
</feature>
<feature type="modified residue" description="N6-acetyllysine" evidence="23">
    <location>
        <position position="684"/>
    </location>
</feature>
<feature type="splice variant" id="VSP_056272" description="In isoform 2." evidence="16 17">
    <original>INECVMKKMNKFYEKRG</original>
    <variation>MSKLRHRQIIFPTTQNQ</variation>
    <location>
        <begin position="636"/>
        <end position="652"/>
    </location>
</feature>
<feature type="splice variant" id="VSP_056273" description="In isoform 2." evidence="16 17">
    <location>
        <begin position="653"/>
        <end position="741"/>
    </location>
</feature>
<feature type="sequence variant" id="VAR_013509" description="In dbSNP:rs151296858." evidence="7 8">
    <original>G</original>
    <variation>S</variation>
    <location>
        <position position="59"/>
    </location>
</feature>
<feature type="sequence variant" id="VAR_042358" description="In dbSNP:rs56250729." evidence="11">
    <original>I</original>
    <variation>L</variation>
    <location>
        <position position="97"/>
    </location>
</feature>
<feature type="sequence variant" id="VAR_042359" description="In dbSNP:rs35553278." evidence="11">
    <original>A</original>
    <variation>T</variation>
    <location>
        <position position="289"/>
    </location>
</feature>
<feature type="sequence variant" id="VAR_013510" description="In dbSNP:rs145787003." evidence="8">
    <original>S</original>
    <variation>F</variation>
    <location>
        <position position="406"/>
    </location>
</feature>
<feature type="sequence variant" id="VAR_012056" description="Risk factor for prostate cancer; reduced enzymatic activity; dbSNP:rs486907." evidence="7 8 9 11">
    <original>R</original>
    <variation>Q</variation>
    <location>
        <position position="462"/>
    </location>
</feature>
<feature type="sequence variant" id="VAR_012057" description="No change in enzymatic activity; dbSNP:rs627928." evidence="7 8 9 11">
    <original>D</original>
    <variation>E</variation>
    <location>
        <position position="541"/>
    </location>
</feature>
<feature type="sequence variant" id="VAR_042360" description="In dbSNP:rs35896902." evidence="11">
    <original>R</original>
    <variation>H</variation>
    <location>
        <position position="592"/>
    </location>
</feature>
<feature type="mutagenesis site" description="Reduced 2-5A binding activity; almost complete loss of 2-5A binding activity; when associated with N-274." evidence="14">
    <original>K</original>
    <variation>N</variation>
    <location>
        <position position="240"/>
    </location>
</feature>
<feature type="mutagenesis site" description="Reduced 2-5A binding activity; almost complete loss of 2-5A binding activity; when associated with N-240." evidence="14">
    <original>K</original>
    <variation>N</variation>
    <location>
        <position position="274"/>
    </location>
</feature>
<feature type="mutagenesis site" description="Complete loss of enzymatic activity and enzyme dimerization. No change in binding to 2-5A and RNA." evidence="15">
    <original>K</original>
    <variation>R</variation>
    <location>
        <position position="392"/>
    </location>
</feature>
<feature type="mutagenesis site" description="No change in enzymatic activity." evidence="5">
    <original>H</original>
    <variation>A</variation>
    <location>
        <position position="583"/>
    </location>
</feature>
<feature type="mutagenesis site" description="No change in enzymatic activity." evidence="5">
    <original>P</original>
    <variation>A</variation>
    <location>
        <position position="584"/>
    </location>
</feature>
<feature type="mutagenesis site" description="No change in enzymatic activity." evidence="5">
    <original>W</original>
    <variation>A</variation>
    <location>
        <position position="632"/>
    </location>
</feature>
<feature type="mutagenesis site" description="Complete loss of enzymatic activity." evidence="5">
    <original>D</original>
    <variation>A</variation>
    <location>
        <position position="661"/>
    </location>
</feature>
<feature type="mutagenesis site" description="Complete loss of enzymatic activity. No change in 2-5A binding and enzyme dimerization." evidence="5">
    <original>R</original>
    <variation>A</variation>
    <location>
        <position position="667"/>
    </location>
</feature>
<feature type="mutagenesis site" description="Complete loss of enzymatic activity. No change in 2-5A binding activity and enzyme dimerization." evidence="5">
    <original>H</original>
    <variation>A</variation>
    <location>
        <position position="672"/>
    </location>
</feature>
<feature type="helix" evidence="24">
    <location>
        <begin position="22"/>
        <end position="34"/>
    </location>
</feature>
<feature type="helix" evidence="24">
    <location>
        <begin position="38"/>
        <end position="46"/>
    </location>
</feature>
<feature type="turn" evidence="24">
    <location>
        <begin position="56"/>
        <end position="58"/>
    </location>
</feature>
<feature type="helix" evidence="24">
    <location>
        <begin position="62"/>
        <end position="68"/>
    </location>
</feature>
<feature type="helix" evidence="24">
    <location>
        <begin position="72"/>
        <end position="80"/>
    </location>
</feature>
<feature type="helix" evidence="24">
    <location>
        <begin position="95"/>
        <end position="102"/>
    </location>
</feature>
<feature type="helix" evidence="24">
    <location>
        <begin position="105"/>
        <end position="113"/>
    </location>
</feature>
<feature type="helix" evidence="24">
    <location>
        <begin position="128"/>
        <end position="134"/>
    </location>
</feature>
<feature type="helix" evidence="24">
    <location>
        <begin position="138"/>
        <end position="146"/>
    </location>
</feature>
<feature type="helix" evidence="24">
    <location>
        <begin position="159"/>
        <end position="163"/>
    </location>
</feature>
<feature type="helix" evidence="24">
    <location>
        <begin position="171"/>
        <end position="178"/>
    </location>
</feature>
<feature type="helix" evidence="24">
    <location>
        <begin position="181"/>
        <end position="189"/>
    </location>
</feature>
<feature type="helix" evidence="24">
    <location>
        <begin position="205"/>
        <end position="211"/>
    </location>
</feature>
<feature type="turn" evidence="24">
    <location>
        <begin position="215"/>
        <end position="217"/>
    </location>
</feature>
<feature type="helix" evidence="24">
    <location>
        <begin position="218"/>
        <end position="227"/>
    </location>
</feature>
<feature type="helix" evidence="25">
    <location>
        <begin position="237"/>
        <end position="239"/>
    </location>
</feature>
<feature type="helix" evidence="24">
    <location>
        <begin position="242"/>
        <end position="248"/>
    </location>
</feature>
<feature type="helix" evidence="24">
    <location>
        <begin position="252"/>
        <end position="260"/>
    </location>
</feature>
<feature type="strand" evidence="24">
    <location>
        <begin position="261"/>
        <end position="263"/>
    </location>
</feature>
<feature type="helix" evidence="24">
    <location>
        <begin position="276"/>
        <end position="282"/>
    </location>
</feature>
<feature type="helix" evidence="24">
    <location>
        <begin position="286"/>
        <end position="295"/>
    </location>
</feature>
<feature type="strand" evidence="26">
    <location>
        <begin position="301"/>
        <end position="303"/>
    </location>
</feature>
<feature type="helix" evidence="26">
    <location>
        <begin position="304"/>
        <end position="310"/>
    </location>
</feature>
<feature type="helix" evidence="26">
    <location>
        <begin position="314"/>
        <end position="322"/>
    </location>
</feature>
<feature type="strand" evidence="26">
    <location>
        <begin position="341"/>
        <end position="344"/>
    </location>
</feature>
<feature type="helix" evidence="26">
    <location>
        <begin position="345"/>
        <end position="352"/>
    </location>
</feature>
<feature type="strand" evidence="26">
    <location>
        <begin position="361"/>
        <end position="363"/>
    </location>
</feature>
<feature type="helix" evidence="26">
    <location>
        <begin position="367"/>
        <end position="369"/>
    </location>
</feature>
<feature type="strand" evidence="26">
    <location>
        <begin position="370"/>
        <end position="374"/>
    </location>
</feature>
<feature type="strand" evidence="26">
    <location>
        <begin position="377"/>
        <end position="395"/>
    </location>
</feature>
<feature type="helix" evidence="26">
    <location>
        <begin position="399"/>
        <end position="409"/>
    </location>
</feature>
<feature type="strand" evidence="26">
    <location>
        <begin position="420"/>
        <end position="425"/>
    </location>
</feature>
<feature type="strand" evidence="26">
    <location>
        <begin position="427"/>
        <end position="435"/>
    </location>
</feature>
<feature type="strand" evidence="26">
    <location>
        <begin position="438"/>
        <end position="440"/>
    </location>
</feature>
<feature type="helix" evidence="26">
    <location>
        <begin position="441"/>
        <end position="445"/>
    </location>
</feature>
<feature type="helix" evidence="26">
    <location>
        <begin position="459"/>
        <end position="477"/>
    </location>
</feature>
<feature type="helix" evidence="26">
    <location>
        <begin position="488"/>
        <end position="490"/>
    </location>
</feature>
<feature type="strand" evidence="26">
    <location>
        <begin position="491"/>
        <end position="493"/>
    </location>
</feature>
<feature type="strand" evidence="26">
    <location>
        <begin position="495"/>
        <end position="497"/>
    </location>
</feature>
<feature type="strand" evidence="26">
    <location>
        <begin position="499"/>
        <end position="501"/>
    </location>
</feature>
<feature type="helix" evidence="26">
    <location>
        <begin position="514"/>
        <end position="532"/>
    </location>
</feature>
<feature type="turn" evidence="26">
    <location>
        <begin position="533"/>
        <end position="535"/>
    </location>
</feature>
<feature type="helix" evidence="26">
    <location>
        <begin position="539"/>
        <end position="544"/>
    </location>
</feature>
<feature type="helix" evidence="26">
    <location>
        <begin position="547"/>
        <end position="551"/>
    </location>
</feature>
<feature type="helix" evidence="26">
    <location>
        <begin position="557"/>
        <end position="567"/>
    </location>
</feature>
<feature type="helix" evidence="26">
    <location>
        <begin position="576"/>
        <end position="580"/>
    </location>
</feature>
<feature type="helix" evidence="26">
    <location>
        <begin position="584"/>
        <end position="586"/>
    </location>
</feature>
<feature type="helix" evidence="26">
    <location>
        <begin position="589"/>
        <end position="600"/>
    </location>
</feature>
<feature type="helix" evidence="26">
    <location>
        <begin position="603"/>
        <end position="606"/>
    </location>
</feature>
<feature type="helix" evidence="26">
    <location>
        <begin position="613"/>
        <end position="618"/>
    </location>
</feature>
<feature type="turn" evidence="26">
    <location>
        <begin position="628"/>
        <end position="631"/>
    </location>
</feature>
<feature type="helix" evidence="26">
    <location>
        <begin position="632"/>
        <end position="634"/>
    </location>
</feature>
<feature type="helix" evidence="26">
    <location>
        <begin position="638"/>
        <end position="645"/>
    </location>
</feature>
<feature type="helix" evidence="26">
    <location>
        <begin position="646"/>
        <end position="648"/>
    </location>
</feature>
<feature type="turn" evidence="26">
    <location>
        <begin position="649"/>
        <end position="652"/>
    </location>
</feature>
<feature type="helix" evidence="26">
    <location>
        <begin position="659"/>
        <end position="672"/>
    </location>
</feature>
<feature type="helix" evidence="26">
    <location>
        <begin position="681"/>
        <end position="685"/>
    </location>
</feature>
<feature type="helix" evidence="26">
    <location>
        <begin position="688"/>
        <end position="695"/>
    </location>
</feature>
<feature type="helix" evidence="26">
    <location>
        <begin position="699"/>
        <end position="707"/>
    </location>
</feature>
<feature type="helix" evidence="26">
    <location>
        <begin position="711"/>
        <end position="715"/>
    </location>
</feature>
<evidence type="ECO:0000250" key="1"/>
<evidence type="ECO:0000255" key="2">
    <source>
        <dbReference type="PROSITE-ProRule" id="PRU00159"/>
    </source>
</evidence>
<evidence type="ECO:0000255" key="3">
    <source>
        <dbReference type="PROSITE-ProRule" id="PRU00725"/>
    </source>
</evidence>
<evidence type="ECO:0000256" key="4">
    <source>
        <dbReference type="SAM" id="MobiDB-lite"/>
    </source>
</evidence>
<evidence type="ECO:0000269" key="5">
    <source>
    </source>
</evidence>
<evidence type="ECO:0000269" key="6">
    <source>
    </source>
</evidence>
<evidence type="ECO:0000269" key="7">
    <source>
    </source>
</evidence>
<evidence type="ECO:0000269" key="8">
    <source>
    </source>
</evidence>
<evidence type="ECO:0000269" key="9">
    <source>
    </source>
</evidence>
<evidence type="ECO:0000269" key="10">
    <source>
    </source>
</evidence>
<evidence type="ECO:0000269" key="11">
    <source>
    </source>
</evidence>
<evidence type="ECO:0000269" key="12">
    <source>
    </source>
</evidence>
<evidence type="ECO:0000269" key="13">
    <source>
    </source>
</evidence>
<evidence type="ECO:0000269" key="14">
    <source>
    </source>
</evidence>
<evidence type="ECO:0000269" key="15">
    <source>
    </source>
</evidence>
<evidence type="ECO:0000303" key="16">
    <source>
    </source>
</evidence>
<evidence type="ECO:0000303" key="17">
    <source>
    </source>
</evidence>
<evidence type="ECO:0000305" key="18"/>
<evidence type="ECO:0000305" key="19">
    <source>
    </source>
</evidence>
<evidence type="ECO:0000305" key="20">
    <source>
    </source>
</evidence>
<evidence type="ECO:0000305" key="21">
    <source>
    </source>
</evidence>
<evidence type="ECO:0000305" key="22">
    <source>
    </source>
</evidence>
<evidence type="ECO:0007744" key="23">
    <source>
    </source>
</evidence>
<evidence type="ECO:0007829" key="24">
    <source>
        <dbReference type="PDB" id="1WDY"/>
    </source>
</evidence>
<evidence type="ECO:0007829" key="25">
    <source>
        <dbReference type="PDB" id="4G8K"/>
    </source>
</evidence>
<evidence type="ECO:0007829" key="26">
    <source>
        <dbReference type="PDB" id="4OAV"/>
    </source>
</evidence>
<sequence length="741" mass="83533">MESRDHNNPQEGPTSSSGRRAAVEDNHLLIKAVQNEDVDLVQQLLEGGANVNFQEEEGGWTPLHNAVQMSREDIVELLLRHGADPVLRKKNGATPFILAAIAGSVKLLKLFLSKGADVNECDFYGFTAFMEAAVYGKVKALKFLYKRGANVNLRRKTKEDQERLRKGGATALMDAAEKGHVEVLKILLDEMGADVNACDNMGRNALIHALLSSDDSDVEAITHLLLDHGADVNVRGERGKTPLILAVEKKHLGLVQRLLEQEHIEINDTDSDGKTALLLAVELKLKKIAELLCKRGASTDCGDLVMTARRNYDHSLVKVLLSHGAKEDFHPPAEDWKPQSSHWGAALKDLHRIYRPMIGKLKFFIDEKYKIADTSEGGIYLGFYEKQEVAVKTFCEGSPRAQREVSCLQSSRENSHLVTFYGSESHRGHLFVCVTLCEQTLEACLDVHRGEDVENEEDEFARNVLSSIFKAVQELHLSCGYTHQDLQPQNILIDSKKAAHLADFDKSIKWAGDPQEVKRDLEDLGRLVLYVVKKGSISFEDLKAQSNEEVVQLSPDEETKDLIHRLFHPGEHVRDCLSDLLGHPFFWTWESRYRTLRNVGNESDIKTRKSESEILRLLQPGPSEHSKSFDKWTTKINECVMKKMNKFYEKRGNFYQNTVGDLLKFIRNLGEHIDEEKHKKMKLKIGDPSLYFQKTFPDLVIYVYTKLQNTEYRKHFPQTHSPNKPQCDGAGGASGLASPGC</sequence>
<keyword id="KW-0002">3D-structure</keyword>
<keyword id="KW-0007">Acetylation</keyword>
<keyword id="KW-0025">Alternative splicing</keyword>
<keyword id="KW-0040">ANK repeat</keyword>
<keyword id="KW-0051">Antiviral defense</keyword>
<keyword id="KW-0067">ATP-binding</keyword>
<keyword id="KW-0963">Cytoplasm</keyword>
<keyword id="KW-0255">Endonuclease</keyword>
<keyword id="KW-0378">Hydrolase</keyword>
<keyword id="KW-0479">Metal-binding</keyword>
<keyword id="KW-0496">Mitochondrion</keyword>
<keyword id="KW-0540">Nuclease</keyword>
<keyword id="KW-0547">Nucleotide-binding</keyword>
<keyword id="KW-1267">Proteomics identification</keyword>
<keyword id="KW-1185">Reference proteome</keyword>
<keyword id="KW-0677">Repeat</keyword>
<keyword id="KW-0694">RNA-binding</keyword>
<keyword id="KW-0862">Zinc</keyword>
<keyword id="KW-0863">Zinc-finger</keyword>
<dbReference type="EC" id="3.1.26.-"/>
<dbReference type="EMBL" id="L10381">
    <property type="protein sequence ID" value="AAA18032.1"/>
    <property type="molecule type" value="Genomic_DNA"/>
</dbReference>
<dbReference type="EMBL" id="CR627369">
    <property type="protein sequence ID" value="CAH10468.1"/>
    <property type="molecule type" value="mRNA"/>
</dbReference>
<dbReference type="EMBL" id="AL138776">
    <property type="status" value="NOT_ANNOTATED_CDS"/>
    <property type="molecule type" value="Genomic_DNA"/>
</dbReference>
<dbReference type="EMBL" id="CH471067">
    <property type="protein sequence ID" value="EAW91128.1"/>
    <property type="molecule type" value="Genomic_DNA"/>
</dbReference>
<dbReference type="EMBL" id="BC090934">
    <property type="protein sequence ID" value="AAH90934.1"/>
    <property type="molecule type" value="mRNA"/>
</dbReference>
<dbReference type="EMBL" id="BC114433">
    <property type="protein sequence ID" value="AAI14434.1"/>
    <property type="molecule type" value="mRNA"/>
</dbReference>
<dbReference type="CCDS" id="CCDS1347.1">
    <molecule id="Q05823-1"/>
</dbReference>
<dbReference type="PIR" id="A45771">
    <property type="entry name" value="A45771"/>
</dbReference>
<dbReference type="RefSeq" id="NP_066956.1">
    <molecule id="Q05823-1"/>
    <property type="nucleotide sequence ID" value="NM_021133.4"/>
</dbReference>
<dbReference type="RefSeq" id="XP_047283062.1">
    <molecule id="Q05823-2"/>
    <property type="nucleotide sequence ID" value="XM_047427106.1"/>
</dbReference>
<dbReference type="RefSeq" id="XP_054194044.1">
    <molecule id="Q05823-2"/>
    <property type="nucleotide sequence ID" value="XM_054338069.1"/>
</dbReference>
<dbReference type="PDB" id="1WDY">
    <property type="method" value="X-ray"/>
    <property type="resolution" value="1.80 A"/>
    <property type="chains" value="A=21-305"/>
</dbReference>
<dbReference type="PDB" id="4G8K">
    <property type="method" value="X-ray"/>
    <property type="resolution" value="2.40 A"/>
    <property type="chains" value="A/B=1-337"/>
</dbReference>
<dbReference type="PDB" id="4G8L">
    <property type="method" value="X-ray"/>
    <property type="resolution" value="2.80 A"/>
    <property type="chains" value="A/B/C/D=1-337"/>
</dbReference>
<dbReference type="PDB" id="4OAU">
    <property type="method" value="X-ray"/>
    <property type="resolution" value="2.60 A"/>
    <property type="chains" value="C=21-719"/>
</dbReference>
<dbReference type="PDB" id="4OAV">
    <property type="method" value="X-ray"/>
    <property type="resolution" value="2.10 A"/>
    <property type="chains" value="B/D=21-719"/>
</dbReference>
<dbReference type="PDBsum" id="1WDY"/>
<dbReference type="PDBsum" id="4G8K"/>
<dbReference type="PDBsum" id="4G8L"/>
<dbReference type="PDBsum" id="4OAU"/>
<dbReference type="PDBsum" id="4OAV"/>
<dbReference type="SMR" id="Q05823"/>
<dbReference type="BioGRID" id="111969">
    <property type="interactions" value="35"/>
</dbReference>
<dbReference type="CORUM" id="Q05823"/>
<dbReference type="DIP" id="DIP-61367N"/>
<dbReference type="FunCoup" id="Q05823">
    <property type="interactions" value="673"/>
</dbReference>
<dbReference type="IntAct" id="Q05823">
    <property type="interactions" value="35"/>
</dbReference>
<dbReference type="MINT" id="Q05823"/>
<dbReference type="STRING" id="9606.ENSP00000356530"/>
<dbReference type="BindingDB" id="Q05823"/>
<dbReference type="ChEMBL" id="CHEMBL3575"/>
<dbReference type="GlyGen" id="Q05823">
    <property type="glycosylation" value="2 sites, 1 O-linked glycan (1 site)"/>
</dbReference>
<dbReference type="iPTMnet" id="Q05823"/>
<dbReference type="PhosphoSitePlus" id="Q05823"/>
<dbReference type="BioMuta" id="RNASEL"/>
<dbReference type="DMDM" id="1350802"/>
<dbReference type="jPOST" id="Q05823"/>
<dbReference type="MassIVE" id="Q05823"/>
<dbReference type="PaxDb" id="9606-ENSP00000356530"/>
<dbReference type="PeptideAtlas" id="Q05823"/>
<dbReference type="ProteomicsDB" id="58353">
    <molecule id="Q05823-1"/>
</dbReference>
<dbReference type="ProteomicsDB" id="66189"/>
<dbReference type="Pumba" id="Q05823"/>
<dbReference type="Antibodypedia" id="1127">
    <property type="antibodies" value="229 antibodies from 29 providers"/>
</dbReference>
<dbReference type="DNASU" id="6041"/>
<dbReference type="Ensembl" id="ENST00000367559.7">
    <molecule id="Q05823-1"/>
    <property type="protein sequence ID" value="ENSP00000356530.3"/>
    <property type="gene ID" value="ENSG00000135828.11"/>
</dbReference>
<dbReference type="Ensembl" id="ENST00000539397.1">
    <molecule id="Q05823-2"/>
    <property type="protein sequence ID" value="ENSP00000440844.1"/>
    <property type="gene ID" value="ENSG00000135828.11"/>
</dbReference>
<dbReference type="GeneID" id="6041"/>
<dbReference type="KEGG" id="hsa:6041"/>
<dbReference type="MANE-Select" id="ENST00000367559.7">
    <property type="protein sequence ID" value="ENSP00000356530.3"/>
    <property type="RefSeq nucleotide sequence ID" value="NM_021133.4"/>
    <property type="RefSeq protein sequence ID" value="NP_066956.1"/>
</dbReference>
<dbReference type="UCSC" id="uc001gpk.4">
    <molecule id="Q05823-1"/>
    <property type="organism name" value="human"/>
</dbReference>
<dbReference type="AGR" id="HGNC:10050"/>
<dbReference type="CTD" id="6041"/>
<dbReference type="DisGeNET" id="6041"/>
<dbReference type="GeneCards" id="RNASEL"/>
<dbReference type="HGNC" id="HGNC:10050">
    <property type="gene designation" value="RNASEL"/>
</dbReference>
<dbReference type="HPA" id="ENSG00000135828">
    <property type="expression patterns" value="Low tissue specificity"/>
</dbReference>
<dbReference type="MalaCards" id="RNASEL"/>
<dbReference type="MIM" id="176807">
    <property type="type" value="phenotype"/>
</dbReference>
<dbReference type="MIM" id="180435">
    <property type="type" value="gene"/>
</dbReference>
<dbReference type="MIM" id="601518">
    <property type="type" value="phenotype"/>
</dbReference>
<dbReference type="neXtProt" id="NX_Q05823"/>
<dbReference type="OpenTargets" id="ENSG00000135828"/>
<dbReference type="Orphanet" id="1331">
    <property type="disease" value="Familial prostate cancer"/>
</dbReference>
<dbReference type="PharmGKB" id="PA34418"/>
<dbReference type="VEuPathDB" id="HostDB:ENSG00000135828"/>
<dbReference type="eggNOG" id="KOG1027">
    <property type="taxonomic scope" value="Eukaryota"/>
</dbReference>
<dbReference type="eggNOG" id="KOG4177">
    <property type="taxonomic scope" value="Eukaryota"/>
</dbReference>
<dbReference type="GeneTree" id="ENSGT00940000161114"/>
<dbReference type="HOGENOM" id="CLU_022542_0_0_1"/>
<dbReference type="InParanoid" id="Q05823"/>
<dbReference type="OMA" id="YGSESHK"/>
<dbReference type="OrthoDB" id="194358at2759"/>
<dbReference type="PAN-GO" id="Q05823">
    <property type="GO annotations" value="5 GO annotations based on evolutionary models"/>
</dbReference>
<dbReference type="PhylomeDB" id="Q05823"/>
<dbReference type="TreeFam" id="TF344032"/>
<dbReference type="BioCyc" id="MetaCyc:HS06069-MONOMER"/>
<dbReference type="BRENDA" id="4.6.1.19">
    <property type="organism ID" value="2681"/>
</dbReference>
<dbReference type="PathwayCommons" id="Q05823"/>
<dbReference type="Reactome" id="R-HSA-8983711">
    <property type="pathway name" value="OAS antiviral response"/>
</dbReference>
<dbReference type="Reactome" id="R-HSA-909733">
    <property type="pathway name" value="Interferon alpha/beta signaling"/>
</dbReference>
<dbReference type="SignaLink" id="Q05823"/>
<dbReference type="SIGNOR" id="Q05823"/>
<dbReference type="BioGRID-ORCS" id="6041">
    <property type="hits" value="9 hits in 1192 CRISPR screens"/>
</dbReference>
<dbReference type="CD-CODE" id="DEE660B4">
    <property type="entry name" value="Stress granule"/>
</dbReference>
<dbReference type="ChiTaRS" id="RNASEL">
    <property type="organism name" value="human"/>
</dbReference>
<dbReference type="EvolutionaryTrace" id="Q05823"/>
<dbReference type="GeneWiki" id="Ribonuclease_L"/>
<dbReference type="GeneWiki" id="RNASEL"/>
<dbReference type="GenomeRNAi" id="6041"/>
<dbReference type="Pharos" id="Q05823">
    <property type="development level" value="Tchem"/>
</dbReference>
<dbReference type="PRO" id="PR:Q05823"/>
<dbReference type="Proteomes" id="UP000005640">
    <property type="component" value="Chromosome 1"/>
</dbReference>
<dbReference type="RNAct" id="Q05823">
    <property type="molecule type" value="protein"/>
</dbReference>
<dbReference type="Bgee" id="ENSG00000135828">
    <property type="expression patterns" value="Expressed in amniotic fluid and 174 other cell types or tissues"/>
</dbReference>
<dbReference type="GO" id="GO:0005829">
    <property type="term" value="C:cytosol"/>
    <property type="evidence" value="ECO:0000304"/>
    <property type="project" value="Reactome"/>
</dbReference>
<dbReference type="GO" id="GO:0005759">
    <property type="term" value="C:mitochondrial matrix"/>
    <property type="evidence" value="ECO:0000304"/>
    <property type="project" value="Reactome"/>
</dbReference>
<dbReference type="GO" id="GO:0016363">
    <property type="term" value="C:nuclear matrix"/>
    <property type="evidence" value="ECO:0007669"/>
    <property type="project" value="Ensembl"/>
</dbReference>
<dbReference type="GO" id="GO:0005524">
    <property type="term" value="F:ATP binding"/>
    <property type="evidence" value="ECO:0007669"/>
    <property type="project" value="UniProtKB-KW"/>
</dbReference>
<dbReference type="GO" id="GO:0042802">
    <property type="term" value="F:identical protein binding"/>
    <property type="evidence" value="ECO:0000353"/>
    <property type="project" value="IntAct"/>
</dbReference>
<dbReference type="GO" id="GO:0004672">
    <property type="term" value="F:protein kinase activity"/>
    <property type="evidence" value="ECO:0007669"/>
    <property type="project" value="InterPro"/>
</dbReference>
<dbReference type="GO" id="GO:0043021">
    <property type="term" value="F:ribonucleoprotein complex binding"/>
    <property type="evidence" value="ECO:0007669"/>
    <property type="project" value="Ensembl"/>
</dbReference>
<dbReference type="GO" id="GO:0003723">
    <property type="term" value="F:RNA binding"/>
    <property type="evidence" value="ECO:0000314"/>
    <property type="project" value="UniProtKB"/>
</dbReference>
<dbReference type="GO" id="GO:0004521">
    <property type="term" value="F:RNA endonuclease activity"/>
    <property type="evidence" value="ECO:0000303"/>
    <property type="project" value="UniProtKB"/>
</dbReference>
<dbReference type="GO" id="GO:0004540">
    <property type="term" value="F:RNA nuclease activity"/>
    <property type="evidence" value="ECO:0000314"/>
    <property type="project" value="ARUK-UCL"/>
</dbReference>
<dbReference type="GO" id="GO:0019843">
    <property type="term" value="F:rRNA binding"/>
    <property type="evidence" value="ECO:0007669"/>
    <property type="project" value="Ensembl"/>
</dbReference>
<dbReference type="GO" id="GO:0008270">
    <property type="term" value="F:zinc ion binding"/>
    <property type="evidence" value="ECO:0007669"/>
    <property type="project" value="UniProtKB-KW"/>
</dbReference>
<dbReference type="GO" id="GO:0051607">
    <property type="term" value="P:defense response to virus"/>
    <property type="evidence" value="ECO:0000314"/>
    <property type="project" value="UniProtKB"/>
</dbReference>
<dbReference type="GO" id="GO:0045444">
    <property type="term" value="P:fat cell differentiation"/>
    <property type="evidence" value="ECO:0007669"/>
    <property type="project" value="Ensembl"/>
</dbReference>
<dbReference type="GO" id="GO:0006397">
    <property type="term" value="P:mRNA processing"/>
    <property type="evidence" value="ECO:0007669"/>
    <property type="project" value="InterPro"/>
</dbReference>
<dbReference type="GO" id="GO:0045071">
    <property type="term" value="P:negative regulation of viral genome replication"/>
    <property type="evidence" value="ECO:0000314"/>
    <property type="project" value="UniProtKB"/>
</dbReference>
<dbReference type="GO" id="GO:0046326">
    <property type="term" value="P:positive regulation of D-glucose import"/>
    <property type="evidence" value="ECO:0007669"/>
    <property type="project" value="Ensembl"/>
</dbReference>
<dbReference type="GO" id="GO:0045944">
    <property type="term" value="P:positive regulation of transcription by RNA polymerase II"/>
    <property type="evidence" value="ECO:0000314"/>
    <property type="project" value="UniProtKB"/>
</dbReference>
<dbReference type="GO" id="GO:0006468">
    <property type="term" value="P:protein phosphorylation"/>
    <property type="evidence" value="ECO:0000303"/>
    <property type="project" value="UniProtKB"/>
</dbReference>
<dbReference type="GO" id="GO:0043488">
    <property type="term" value="P:regulation of mRNA stability"/>
    <property type="evidence" value="ECO:0007669"/>
    <property type="project" value="Ensembl"/>
</dbReference>
<dbReference type="GO" id="GO:0006396">
    <property type="term" value="P:RNA processing"/>
    <property type="evidence" value="ECO:0000318"/>
    <property type="project" value="GO_Central"/>
</dbReference>
<dbReference type="GO" id="GO:0006364">
    <property type="term" value="P:rRNA processing"/>
    <property type="evidence" value="ECO:0007669"/>
    <property type="project" value="Ensembl"/>
</dbReference>
<dbReference type="CDD" id="cd10423">
    <property type="entry name" value="RNase_RNase-L"/>
    <property type="match status" value="1"/>
</dbReference>
<dbReference type="FunFam" id="1.25.40.20:FF:000231">
    <property type="entry name" value="2-5A-dependent ribonuclease"/>
    <property type="match status" value="1"/>
</dbReference>
<dbReference type="FunFam" id="1.10.510.10:FF:000618">
    <property type="entry name" value="Ribonuclease L"/>
    <property type="match status" value="1"/>
</dbReference>
<dbReference type="FunFam" id="1.20.1440.180:FF:000003">
    <property type="entry name" value="Ribonuclease L"/>
    <property type="match status" value="1"/>
</dbReference>
<dbReference type="Gene3D" id="1.25.40.20">
    <property type="entry name" value="Ankyrin repeat-containing domain"/>
    <property type="match status" value="1"/>
</dbReference>
<dbReference type="Gene3D" id="1.20.1440.180">
    <property type="entry name" value="KEN domain"/>
    <property type="match status" value="1"/>
</dbReference>
<dbReference type="Gene3D" id="1.10.510.10">
    <property type="entry name" value="Transferase(Phosphotransferase) domain 1"/>
    <property type="match status" value="1"/>
</dbReference>
<dbReference type="InterPro" id="IPR002110">
    <property type="entry name" value="Ankyrin_rpt"/>
</dbReference>
<dbReference type="InterPro" id="IPR036770">
    <property type="entry name" value="Ankyrin_rpt-contain_sf"/>
</dbReference>
<dbReference type="InterPro" id="IPR010513">
    <property type="entry name" value="KEN_dom"/>
</dbReference>
<dbReference type="InterPro" id="IPR038357">
    <property type="entry name" value="KEN_sf"/>
</dbReference>
<dbReference type="InterPro" id="IPR011009">
    <property type="entry name" value="Kinase-like_dom_sf"/>
</dbReference>
<dbReference type="InterPro" id="IPR000719">
    <property type="entry name" value="Prot_kinase_dom"/>
</dbReference>
<dbReference type="InterPro" id="IPR042745">
    <property type="entry name" value="RNase-L_RNase"/>
</dbReference>
<dbReference type="PANTHER" id="PTHR24141">
    <property type="entry name" value="2-5A-DEPENDENT RIBONUCLEASE"/>
    <property type="match status" value="1"/>
</dbReference>
<dbReference type="PANTHER" id="PTHR24141:SF1">
    <property type="entry name" value="2-5A-DEPENDENT RIBONUCLEASE"/>
    <property type="match status" value="1"/>
</dbReference>
<dbReference type="Pfam" id="PF12796">
    <property type="entry name" value="Ank_2"/>
    <property type="match status" value="3"/>
</dbReference>
<dbReference type="Pfam" id="PF13857">
    <property type="entry name" value="Ank_5"/>
    <property type="match status" value="1"/>
</dbReference>
<dbReference type="Pfam" id="PF00069">
    <property type="entry name" value="Pkinase"/>
    <property type="match status" value="1"/>
</dbReference>
<dbReference type="Pfam" id="PF06479">
    <property type="entry name" value="Ribonuc_2-5A"/>
    <property type="match status" value="1"/>
</dbReference>
<dbReference type="PRINTS" id="PR01415">
    <property type="entry name" value="ANKYRIN"/>
</dbReference>
<dbReference type="SMART" id="SM00248">
    <property type="entry name" value="ANK"/>
    <property type="match status" value="8"/>
</dbReference>
<dbReference type="SMART" id="SM00580">
    <property type="entry name" value="PUG"/>
    <property type="match status" value="1"/>
</dbReference>
<dbReference type="SMART" id="SM00220">
    <property type="entry name" value="S_TKc"/>
    <property type="match status" value="1"/>
</dbReference>
<dbReference type="SUPFAM" id="SSF48403">
    <property type="entry name" value="Ankyrin repeat"/>
    <property type="match status" value="1"/>
</dbReference>
<dbReference type="SUPFAM" id="SSF56112">
    <property type="entry name" value="Protein kinase-like (PK-like)"/>
    <property type="match status" value="1"/>
</dbReference>
<dbReference type="PROSITE" id="PS50297">
    <property type="entry name" value="ANK_REP_REGION"/>
    <property type="match status" value="1"/>
</dbReference>
<dbReference type="PROSITE" id="PS50088">
    <property type="entry name" value="ANK_REPEAT"/>
    <property type="match status" value="6"/>
</dbReference>
<dbReference type="PROSITE" id="PS51392">
    <property type="entry name" value="KEN"/>
    <property type="match status" value="1"/>
</dbReference>
<dbReference type="PROSITE" id="PS50011">
    <property type="entry name" value="PROTEIN_KINASE_DOM"/>
    <property type="match status" value="1"/>
</dbReference>
<name>RN5A_HUMAN</name>
<comment type="function">
    <text evidence="6 12">Endoribonuclease that functions in the interferon (IFN) antiviral response. In INF treated and virus infected cells, RNASEL probably mediates its antiviral effects through a combination of direct cleavage of single-stranded viral RNAs, inhibition of protein synthesis through the degradation of rRNA, induction of apoptosis, and induction of other antiviral genes. RNASEL mediated apoptosis is the result of a JNK-dependent stress-response pathway leading to cytochrome c release from mitochondria and caspase-dependent apoptosis. Therefore, activation of RNASEL could lead to elimination of virus infected cells under some circumstances. In the crosstalk between autophagy and apoptosis proposed to induce autophagy as an early stress response to small double-stranded RNA and at later stages of prolonged stress to activate caspase-dependent proteolytic cleavage of BECN1 to terminate autophagy and promote apoptosis (PubMed:26263979). Might play a central role in the regulation of mRNA turnover (PubMed:11585831). Cleaves 3' of UpNp dimers, with preference for UU and UA sequences, to sets of discrete products ranging from between 4 and 22 nucleotides in length.</text>
</comment>
<comment type="cofactor">
    <cofactor>
        <name>Mn(2+)</name>
        <dbReference type="ChEBI" id="CHEBI:29035"/>
    </cofactor>
    <cofactor>
        <name>Mg(2+)</name>
        <dbReference type="ChEBI" id="CHEBI:18420"/>
    </cofactor>
    <text>Manganese or magnesium. Required for optimal RNA cleavage rates.</text>
</comment>
<comment type="activity regulation">
    <text>After binding to 2-5A (5'-phosphorylated 2',5'-linked oligoadenylates) the homodimerization and subsequent activation occurs. Inhibited by RNASEL inhibitor ABCE1/RLI, a cytoplasmic member of the ATP-binding cassette (ABC) transporter family.</text>
</comment>
<comment type="subunit">
    <text evidence="10 13">Monomer (inactive form) or homodimer. Interacts with ABCE1; this interaction inhibits the RNASEL.</text>
</comment>
<comment type="interaction">
    <interactant intactId="EBI-8390477">
        <id>Q05823</id>
    </interactant>
    <interactant intactId="EBI-297509">
        <id>P46940</id>
        <label>IQGAP1</label>
    </interactant>
    <organismsDiffer>false</organismsDiffer>
    <experiments>2</experiments>
</comment>
<comment type="interaction">
    <interactant intactId="EBI-16094551">
        <id>Q05823-1</id>
    </interactant>
    <interactant intactId="EBI-16094551">
        <id>Q05823-1</id>
        <label>RNASEL</label>
    </interactant>
    <organismsDiffer>false</organismsDiffer>
    <experiments>2</experiments>
</comment>
<comment type="subcellular location">
    <subcellularLocation>
        <location evidence="6">Cytoplasm</location>
    </subcellularLocation>
    <subcellularLocation>
        <location evidence="6">Mitochondrion</location>
    </subcellularLocation>
</comment>
<comment type="alternative products">
    <event type="alternative splicing"/>
    <isoform>
        <id>Q05823-1</id>
        <name>1</name>
        <sequence type="displayed"/>
    </isoform>
    <isoform>
        <id>Q05823-2</id>
        <name>2</name>
        <sequence type="described" ref="VSP_056272 VSP_056273"/>
    </isoform>
</comment>
<comment type="tissue specificity">
    <text>Highly expressed in spleen and thymus followed by prostate, testis, uterus, small intestine, colon and peripheral blood leukocytes.</text>
</comment>
<comment type="induction">
    <text>By interferons. Virus replication in higher vertebrates is restrained by IFNs that cause cells to transcribe genes encoding antiviral proteins, such as 2'-5' oligoadenylate synthetases (OASs). oligoadenylate synthetase is stimulated by dsRNA to produce 5'-phosphorylated, 2'-5'-linked oligoadenylates (2-5A), whose function is to activate RNASEL.</text>
</comment>
<comment type="domain">
    <text>The nine ankyrin repeats also called 2-5A sensor constitute the N-terminus 2-5A binding domain.</text>
</comment>
<comment type="domain">
    <text>The protein kinase domain is predicted to be catalytically inactive. It allows the homodimerization.</text>
</comment>
<comment type="domain">
    <text evidence="1">The ribonuclease domain is located in the C-terminus. A single active nuclease domain in a dimer is sufficient for ribonuclease activity (By similarity).</text>
</comment>
<comment type="disease" evidence="19 20 21 22">
    <disease id="DI-01736">
        <name>Prostate cancer, hereditary, 1</name>
        <acronym>HPC1</acronym>
        <description>A condition associated with familial predisposition to cancer of the prostate. Most prostate cancers are adenocarcinomas that develop in the acini of the prostatic ducts. Other rare histopathologic types of prostate cancer that occur in approximately 5% of patients include small cell carcinoma, mucinous carcinoma, prostatic ductal carcinoma, transitional cell carcinoma, squamous cell carcinoma, basal cell carcinoma, adenoid cystic carcinoma (basaloid), signet-ring cell carcinoma and neuroendocrine carcinoma.</description>
        <dbReference type="MIM" id="601518"/>
    </disease>
    <text>Disease susceptibility is associated with variants affecting the gene represented in this entry.</text>
</comment>
<comment type="similarity">
    <text evidence="18">Belongs to the protein kinase superfamily.</text>
</comment>
<gene>
    <name type="primary">RNASEL</name>
    <name type="synonym">RNS4</name>
</gene>
<accession>Q05823</accession>
<accession>Q5W0L2</accession>
<accession>Q6AI46</accession>
<proteinExistence type="evidence at protein level"/>
<reference key="1">
    <citation type="journal article" date="1993" name="Cell">
        <title>Expression cloning of 2-5A-dependent RNAase: a uniquely regulated mediator of interferon action.</title>
        <authorList>
            <person name="Zhou A."/>
            <person name="Hassel B.A."/>
            <person name="Silverman R.H."/>
        </authorList>
    </citation>
    <scope>NUCLEOTIDE SEQUENCE [GENOMIC DNA]</scope>
    <scope>MUTAGENESIS OF LYS-240 AND LYS-274</scope>
    <source>
        <tissue>Kidney</tissue>
    </source>
</reference>
<reference key="2">
    <citation type="journal article" date="2000" name="Mamm. Genome">
        <title>Analysis and origins of the human and mouse RNase L genes: mediators of interferon action.</title>
        <authorList>
            <person name="Zhou A."/>
            <person name="Nie H."/>
            <person name="Silverman R.H."/>
        </authorList>
    </citation>
    <scope>NUCLEOTIDE SEQUENCE [GENOMIC DNA]</scope>
    <source>
        <tissue>Placenta</tissue>
    </source>
</reference>
<reference key="3">
    <citation type="journal article" date="2007" name="BMC Genomics">
        <title>The full-ORF clone resource of the German cDNA consortium.</title>
        <authorList>
            <person name="Bechtel S."/>
            <person name="Rosenfelder H."/>
            <person name="Duda A."/>
            <person name="Schmidt C.P."/>
            <person name="Ernst U."/>
            <person name="Wellenreuther R."/>
            <person name="Mehrle A."/>
            <person name="Schuster C."/>
            <person name="Bahr A."/>
            <person name="Bloecker H."/>
            <person name="Heubner D."/>
            <person name="Hoerlein A."/>
            <person name="Michel G."/>
            <person name="Wedler H."/>
            <person name="Koehrer K."/>
            <person name="Ottenwaelder B."/>
            <person name="Poustka A."/>
            <person name="Wiemann S."/>
            <person name="Schupp I."/>
        </authorList>
    </citation>
    <scope>NUCLEOTIDE SEQUENCE [LARGE SCALE MRNA] (ISOFORM 2)</scope>
    <source>
        <tissue>Colon carcinoma</tissue>
    </source>
</reference>
<reference key="4">
    <citation type="journal article" date="2006" name="Nature">
        <title>The DNA sequence and biological annotation of human chromosome 1.</title>
        <authorList>
            <person name="Gregory S.G."/>
            <person name="Barlow K.F."/>
            <person name="McLay K.E."/>
            <person name="Kaul R."/>
            <person name="Swarbreck D."/>
            <person name="Dunham A."/>
            <person name="Scott C.E."/>
            <person name="Howe K.L."/>
            <person name="Woodfine K."/>
            <person name="Spencer C.C.A."/>
            <person name="Jones M.C."/>
            <person name="Gillson C."/>
            <person name="Searle S."/>
            <person name="Zhou Y."/>
            <person name="Kokocinski F."/>
            <person name="McDonald L."/>
            <person name="Evans R."/>
            <person name="Phillips K."/>
            <person name="Atkinson A."/>
            <person name="Cooper R."/>
            <person name="Jones C."/>
            <person name="Hall R.E."/>
            <person name="Andrews T.D."/>
            <person name="Lloyd C."/>
            <person name="Ainscough R."/>
            <person name="Almeida J.P."/>
            <person name="Ambrose K.D."/>
            <person name="Anderson F."/>
            <person name="Andrew R.W."/>
            <person name="Ashwell R.I.S."/>
            <person name="Aubin K."/>
            <person name="Babbage A.K."/>
            <person name="Bagguley C.L."/>
            <person name="Bailey J."/>
            <person name="Beasley H."/>
            <person name="Bethel G."/>
            <person name="Bird C.P."/>
            <person name="Bray-Allen S."/>
            <person name="Brown J.Y."/>
            <person name="Brown A.J."/>
            <person name="Buckley D."/>
            <person name="Burton J."/>
            <person name="Bye J."/>
            <person name="Carder C."/>
            <person name="Chapman J.C."/>
            <person name="Clark S.Y."/>
            <person name="Clarke G."/>
            <person name="Clee C."/>
            <person name="Cobley V."/>
            <person name="Collier R.E."/>
            <person name="Corby N."/>
            <person name="Coville G.J."/>
            <person name="Davies J."/>
            <person name="Deadman R."/>
            <person name="Dunn M."/>
            <person name="Earthrowl M."/>
            <person name="Ellington A.G."/>
            <person name="Errington H."/>
            <person name="Frankish A."/>
            <person name="Frankland J."/>
            <person name="French L."/>
            <person name="Garner P."/>
            <person name="Garnett J."/>
            <person name="Gay L."/>
            <person name="Ghori M.R.J."/>
            <person name="Gibson R."/>
            <person name="Gilby L.M."/>
            <person name="Gillett W."/>
            <person name="Glithero R.J."/>
            <person name="Grafham D.V."/>
            <person name="Griffiths C."/>
            <person name="Griffiths-Jones S."/>
            <person name="Grocock R."/>
            <person name="Hammond S."/>
            <person name="Harrison E.S.I."/>
            <person name="Hart E."/>
            <person name="Haugen E."/>
            <person name="Heath P.D."/>
            <person name="Holmes S."/>
            <person name="Holt K."/>
            <person name="Howden P.J."/>
            <person name="Hunt A.R."/>
            <person name="Hunt S.E."/>
            <person name="Hunter G."/>
            <person name="Isherwood J."/>
            <person name="James R."/>
            <person name="Johnson C."/>
            <person name="Johnson D."/>
            <person name="Joy A."/>
            <person name="Kay M."/>
            <person name="Kershaw J.K."/>
            <person name="Kibukawa M."/>
            <person name="Kimberley A.M."/>
            <person name="King A."/>
            <person name="Knights A.J."/>
            <person name="Lad H."/>
            <person name="Laird G."/>
            <person name="Lawlor S."/>
            <person name="Leongamornlert D.A."/>
            <person name="Lloyd D.M."/>
            <person name="Loveland J."/>
            <person name="Lovell J."/>
            <person name="Lush M.J."/>
            <person name="Lyne R."/>
            <person name="Martin S."/>
            <person name="Mashreghi-Mohammadi M."/>
            <person name="Matthews L."/>
            <person name="Matthews N.S.W."/>
            <person name="McLaren S."/>
            <person name="Milne S."/>
            <person name="Mistry S."/>
            <person name="Moore M.J.F."/>
            <person name="Nickerson T."/>
            <person name="O'Dell C.N."/>
            <person name="Oliver K."/>
            <person name="Palmeiri A."/>
            <person name="Palmer S.A."/>
            <person name="Parker A."/>
            <person name="Patel D."/>
            <person name="Pearce A.V."/>
            <person name="Peck A.I."/>
            <person name="Pelan S."/>
            <person name="Phelps K."/>
            <person name="Phillimore B.J."/>
            <person name="Plumb R."/>
            <person name="Rajan J."/>
            <person name="Raymond C."/>
            <person name="Rouse G."/>
            <person name="Saenphimmachak C."/>
            <person name="Sehra H.K."/>
            <person name="Sheridan E."/>
            <person name="Shownkeen R."/>
            <person name="Sims S."/>
            <person name="Skuce C.D."/>
            <person name="Smith M."/>
            <person name="Steward C."/>
            <person name="Subramanian S."/>
            <person name="Sycamore N."/>
            <person name="Tracey A."/>
            <person name="Tromans A."/>
            <person name="Van Helmond Z."/>
            <person name="Wall M."/>
            <person name="Wallis J.M."/>
            <person name="White S."/>
            <person name="Whitehead S.L."/>
            <person name="Wilkinson J.E."/>
            <person name="Willey D.L."/>
            <person name="Williams H."/>
            <person name="Wilming L."/>
            <person name="Wray P.W."/>
            <person name="Wu Z."/>
            <person name="Coulson A."/>
            <person name="Vaudin M."/>
            <person name="Sulston J.E."/>
            <person name="Durbin R.M."/>
            <person name="Hubbard T."/>
            <person name="Wooster R."/>
            <person name="Dunham I."/>
            <person name="Carter N.P."/>
            <person name="McVean G."/>
            <person name="Ross M.T."/>
            <person name="Harrow J."/>
            <person name="Olson M.V."/>
            <person name="Beck S."/>
            <person name="Rogers J."/>
            <person name="Bentley D.R."/>
        </authorList>
    </citation>
    <scope>NUCLEOTIDE SEQUENCE [LARGE SCALE GENOMIC DNA]</scope>
</reference>
<reference key="5">
    <citation type="submission" date="2005-07" db="EMBL/GenBank/DDBJ databases">
        <authorList>
            <person name="Mural R.J."/>
            <person name="Istrail S."/>
            <person name="Sutton G."/>
            <person name="Florea L."/>
            <person name="Halpern A.L."/>
            <person name="Mobarry C.M."/>
            <person name="Lippert R."/>
            <person name="Walenz B."/>
            <person name="Shatkay H."/>
            <person name="Dew I."/>
            <person name="Miller J.R."/>
            <person name="Flanigan M.J."/>
            <person name="Edwards N.J."/>
            <person name="Bolanos R."/>
            <person name="Fasulo D."/>
            <person name="Halldorsson B.V."/>
            <person name="Hannenhalli S."/>
            <person name="Turner R."/>
            <person name="Yooseph S."/>
            <person name="Lu F."/>
            <person name="Nusskern D.R."/>
            <person name="Shue B.C."/>
            <person name="Zheng X.H."/>
            <person name="Zhong F."/>
            <person name="Delcher A.L."/>
            <person name="Huson D.H."/>
            <person name="Kravitz S.A."/>
            <person name="Mouchard L."/>
            <person name="Reinert K."/>
            <person name="Remington K.A."/>
            <person name="Clark A.G."/>
            <person name="Waterman M.S."/>
            <person name="Eichler E.E."/>
            <person name="Adams M.D."/>
            <person name="Hunkapiller M.W."/>
            <person name="Myers E.W."/>
            <person name="Venter J.C."/>
        </authorList>
    </citation>
    <scope>NUCLEOTIDE SEQUENCE [LARGE SCALE GENOMIC DNA]</scope>
</reference>
<reference key="6">
    <citation type="journal article" date="2004" name="Genome Res.">
        <title>The status, quality, and expansion of the NIH full-length cDNA project: the Mammalian Gene Collection (MGC).</title>
        <authorList>
            <consortium name="The MGC Project Team"/>
        </authorList>
    </citation>
    <scope>NUCLEOTIDE SEQUENCE [LARGE SCALE MRNA] (ISOFORMS 1 AND 2)</scope>
    <source>
        <tissue>Lymph</tissue>
    </source>
</reference>
<reference key="7">
    <citation type="journal article" date="1994" name="J. Biol. Chem.">
        <title>Intrinsic molecular activities of the interferon-induced 2-5A-dependent RNase.</title>
        <authorList>
            <person name="Dong B."/>
            <person name="Xu L."/>
            <person name="Zhou A."/>
            <person name="Hassel B.A."/>
            <person name="Lee X."/>
            <person name="Torrence P.F."/>
            <person name="Silverman R.H."/>
        </authorList>
    </citation>
    <scope>CHARACTERIZATION OF RNASEL ACTIVITY</scope>
</reference>
<reference key="8">
    <citation type="journal article" date="1995" name="J. Biol. Chem.">
        <title>Cloning and characterization of a RNase L inhibitor. A new component of the interferon-regulated 2-5A pathway.</title>
        <authorList>
            <person name="Bisbal C."/>
            <person name="Martinand C."/>
            <person name="Silhol M."/>
            <person name="Lebleu B."/>
            <person name="Salehzada T."/>
        </authorList>
    </citation>
    <scope>INTERACTION WITH ABCE1</scope>
</reference>
<reference key="9">
    <citation type="journal article" date="2001" name="J. Biol. Chem.">
        <title>The 2-5A/RNase L/RNase L inhibitor (RNI) pathway regulates mitochondrial mRNAs stability in interferon alpha-treated H9 cells.</title>
        <authorList>
            <person name="Le Roy F."/>
            <person name="Bisbal C."/>
            <person name="Silhol M."/>
            <person name="Martinand C."/>
            <person name="Lebleu B."/>
            <person name="Salehzada T."/>
        </authorList>
    </citation>
    <scope>FUNCTION</scope>
    <scope>SUBCELLULAR LOCATION</scope>
</reference>
<reference key="10">
    <citation type="journal article" date="2002" name="J. Biol. Chem.">
        <authorList>
            <person name="Le Roy F."/>
            <person name="Bisbal C."/>
            <person name="Silhol M."/>
            <person name="Martinand C."/>
            <person name="Lebleu B."/>
            <person name="Salehzada T."/>
        </authorList>
    </citation>
    <scope>ERRATUM OF PUBMED:11585831</scope>
</reference>
<reference key="11">
    <citation type="journal article" date="1998" name="Biomed. Pharmacother.">
        <title>The 2-5A system in viral infection and apoptosis.</title>
        <authorList>
            <person name="Castelli J."/>
            <person name="Wood K.A."/>
            <person name="Youle R.J."/>
        </authorList>
    </citation>
    <scope>REVIEW</scope>
</reference>
<reference key="12">
    <citation type="journal article" date="1999" name="Nucleic Acids Res.">
        <title>Alternative function of a protein kinase homology domain in 2', 5'-oligoadenylate dependent RNase L.</title>
        <authorList>
            <person name="Dong B."/>
            <person name="Silverman R.H."/>
        </authorList>
    </citation>
    <scope>MUTAGENESIS OF LYS-392</scope>
</reference>
<reference key="13">
    <citation type="journal article" date="2001" name="RNA">
        <title>Basis for regulated RNA cleavage by functional analysis of RNase L and Ire1p.</title>
        <authorList>
            <person name="Dong B."/>
            <person name="Niwa M."/>
            <person name="Walter P."/>
            <person name="Silverman R.H."/>
        </authorList>
    </citation>
    <scope>MUTAGENESIS OF HIS-583; PRO-584; TRP-632; ASP-661; ARG-667 AND HIS-672</scope>
</reference>
<reference key="14">
    <citation type="journal article" date="2009" name="Science">
        <title>Lysine acetylation targets protein complexes and co-regulates major cellular functions.</title>
        <authorList>
            <person name="Choudhary C."/>
            <person name="Kumar C."/>
            <person name="Gnad F."/>
            <person name="Nielsen M.L."/>
            <person name="Rehman M."/>
            <person name="Walther T.C."/>
            <person name="Olsen J.V."/>
            <person name="Mann M."/>
        </authorList>
    </citation>
    <scope>ACETYLATION [LARGE SCALE ANALYSIS] AT LYS-684</scope>
    <scope>IDENTIFICATION BY MASS SPECTROMETRY [LARGE SCALE ANALYSIS]</scope>
</reference>
<reference key="15">
    <citation type="journal article" date="2015" name="Int. J. Mol. Sci.">
        <title>RNase L cleavage products promote switch from autophagy to apoptosis by caspase-mediated cleavage of beclin-1.</title>
        <authorList>
            <person name="Siddiqui M.A."/>
            <person name="Mukherjee S."/>
            <person name="Manivannan P."/>
            <person name="Malathi K."/>
        </authorList>
    </citation>
    <scope>FUNCTION</scope>
</reference>
<reference key="16">
    <citation type="journal article" date="2004" name="EMBO J.">
        <title>Structural basis for recognition of 2',5'-linked oligoadenylates by human ribonuclease L.</title>
        <authorList>
            <person name="Tanaka N."/>
            <person name="Nakanishi M."/>
            <person name="Kusakabe Y."/>
            <person name="Goto Y."/>
            <person name="Kitade Y."/>
            <person name="Nakamura K.T."/>
        </authorList>
    </citation>
    <scope>X-RAY CRYSTALLOGRAPHY (1.8 ANGSTROMS) OF 21-305 IN COMPLEX WITH THE ACTIVATOR 2-5A</scope>
</reference>
<reference key="17">
    <citation type="journal article" date="2002" name="Am. J. Hum. Genet.">
        <title>Germline alterations of the RNASEL gene, a candidate HPC1 gene at 1q25, in patients and families with prostate cancer.</title>
        <authorList>
            <person name="Roekman A."/>
            <person name="Ikonen T."/>
            <person name="Seppaelae E.H."/>
            <person name="Nupponen N."/>
            <person name="Autio V."/>
            <person name="Mononen N."/>
            <person name="Bailey-Wilson J."/>
            <person name="Trent J."/>
            <person name="Carpten J."/>
            <person name="Matikainen M.P."/>
            <person name="Koivisto P.A."/>
            <person name="Tammela T.L.J."/>
            <person name="Kallioniemi O.-P."/>
            <person name="Schleutker J."/>
        </authorList>
    </citation>
    <scope>VARIANTS SER-59; PHE-406; GLN-462 AND GLU-541</scope>
</reference>
<reference key="18">
    <citation type="journal article" date="2002" name="Nat. Genet.">
        <title>Germline mutations in the ribonuclease L gene in families showing linkage with HPC1.</title>
        <authorList>
            <person name="Carpten J."/>
            <person name="Nupponen N."/>
            <person name="Isaacs S."/>
            <person name="Sood R."/>
            <person name="Robbins C."/>
            <person name="Xu J."/>
            <person name="Faruque M."/>
            <person name="Moses T."/>
            <person name="Ewing C."/>
            <person name="Gillanders E."/>
            <person name="Hu P."/>
            <person name="Bujnovszky P."/>
            <person name="Makalowska I."/>
            <person name="Baffoe-Bonnie A."/>
            <person name="Faith D."/>
            <person name="Smith J."/>
            <person name="Stephan D."/>
            <person name="Wiley K."/>
            <person name="Brownstein M."/>
            <person name="Gildea D."/>
            <person name="Kelly B."/>
            <person name="Jenkins R."/>
            <person name="Hostetter G."/>
            <person name="Matikainen M."/>
            <person name="Schleutker J."/>
            <person name="Klinger K."/>
            <person name="Connors T."/>
            <person name="Xiang Y."/>
            <person name="Wang Z."/>
            <person name="De Marzo A."/>
            <person name="Papadopoulos N."/>
            <person name="Kallioniemi O.-P."/>
            <person name="Burk R."/>
            <person name="Meyers D."/>
            <person name="Groenberg H."/>
            <person name="Meltzer P."/>
            <person name="Silverman R."/>
            <person name="Bailey-Wilson J."/>
            <person name="Walsh P."/>
            <person name="Isaacs W."/>
            <person name="Trent J."/>
        </authorList>
    </citation>
    <scope>VARIANTS SER-59; GLN-462 AND GLU-541</scope>
</reference>
<reference key="19">
    <citation type="journal article" date="2002" name="Nat. Genet.">
        <title>RNASEL Arg462Gln variant is implicated in up to 13% of prostate cancer cases.</title>
        <authorList>
            <person name="Casey G."/>
            <person name="Neville P.J."/>
            <person name="Plummer S.J."/>
            <person name="Xiang Y."/>
            <person name="Krumroy L.M."/>
            <person name="Klein E.A."/>
            <person name="Catalona W.J."/>
            <person name="Nupponen N."/>
            <person name="Carpten J.D."/>
            <person name="Trent J.M."/>
            <person name="Silverman R.H."/>
            <person name="Witte J.S."/>
        </authorList>
    </citation>
    <scope>CHARACTERIZATION OF VARIANTS GLN-462 AND GLU-541</scope>
</reference>
<reference key="20">
    <citation type="journal article" date="2007" name="Nature">
        <title>Patterns of somatic mutation in human cancer genomes.</title>
        <authorList>
            <person name="Greenman C."/>
            <person name="Stephens P."/>
            <person name="Smith R."/>
            <person name="Dalgliesh G.L."/>
            <person name="Hunter C."/>
            <person name="Bignell G."/>
            <person name="Davies H."/>
            <person name="Teague J."/>
            <person name="Butler A."/>
            <person name="Stevens C."/>
            <person name="Edkins S."/>
            <person name="O'Meara S."/>
            <person name="Vastrik I."/>
            <person name="Schmidt E.E."/>
            <person name="Avis T."/>
            <person name="Barthorpe S."/>
            <person name="Bhamra G."/>
            <person name="Buck G."/>
            <person name="Choudhury B."/>
            <person name="Clements J."/>
            <person name="Cole J."/>
            <person name="Dicks E."/>
            <person name="Forbes S."/>
            <person name="Gray K."/>
            <person name="Halliday K."/>
            <person name="Harrison R."/>
            <person name="Hills K."/>
            <person name="Hinton J."/>
            <person name="Jenkinson A."/>
            <person name="Jones D."/>
            <person name="Menzies A."/>
            <person name="Mironenko T."/>
            <person name="Perry J."/>
            <person name="Raine K."/>
            <person name="Richardson D."/>
            <person name="Shepherd R."/>
            <person name="Small A."/>
            <person name="Tofts C."/>
            <person name="Varian J."/>
            <person name="Webb T."/>
            <person name="West S."/>
            <person name="Widaa S."/>
            <person name="Yates A."/>
            <person name="Cahill D.P."/>
            <person name="Louis D.N."/>
            <person name="Goldstraw P."/>
            <person name="Nicholson A.G."/>
            <person name="Brasseur F."/>
            <person name="Looijenga L."/>
            <person name="Weber B.L."/>
            <person name="Chiew Y.-E."/>
            <person name="DeFazio A."/>
            <person name="Greaves M.F."/>
            <person name="Green A.R."/>
            <person name="Campbell P."/>
            <person name="Birney E."/>
            <person name="Easton D.F."/>
            <person name="Chenevix-Trench G."/>
            <person name="Tan M.-H."/>
            <person name="Khoo S.K."/>
            <person name="Teh B.T."/>
            <person name="Yuen S.T."/>
            <person name="Leung S.Y."/>
            <person name="Wooster R."/>
            <person name="Futreal P.A."/>
            <person name="Stratton M.R."/>
        </authorList>
    </citation>
    <scope>VARIANTS [LARGE SCALE ANALYSIS] LEU-97; THR-289; GLN-462; GLU-541 AND HIS-592</scope>
</reference>
<organism>
    <name type="scientific">Homo sapiens</name>
    <name type="common">Human</name>
    <dbReference type="NCBI Taxonomy" id="9606"/>
    <lineage>
        <taxon>Eukaryota</taxon>
        <taxon>Metazoa</taxon>
        <taxon>Chordata</taxon>
        <taxon>Craniata</taxon>
        <taxon>Vertebrata</taxon>
        <taxon>Euteleostomi</taxon>
        <taxon>Mammalia</taxon>
        <taxon>Eutheria</taxon>
        <taxon>Euarchontoglires</taxon>
        <taxon>Primates</taxon>
        <taxon>Haplorrhini</taxon>
        <taxon>Catarrhini</taxon>
        <taxon>Hominidae</taxon>
        <taxon>Homo</taxon>
    </lineage>
</organism>